<feature type="chain" id="PRO_0000375606" description="Succinyl-diaminopimelate desuccinylase">
    <location>
        <begin position="1"/>
        <end position="390"/>
    </location>
</feature>
<feature type="active site" evidence="1">
    <location>
        <position position="77"/>
    </location>
</feature>
<feature type="active site" description="Proton acceptor" evidence="1">
    <location>
        <position position="141"/>
    </location>
</feature>
<feature type="binding site" evidence="1">
    <location>
        <position position="75"/>
    </location>
    <ligand>
        <name>Zn(2+)</name>
        <dbReference type="ChEBI" id="CHEBI:29105"/>
        <label>1</label>
    </ligand>
</feature>
<feature type="binding site" evidence="1">
    <location>
        <position position="108"/>
    </location>
    <ligand>
        <name>Zn(2+)</name>
        <dbReference type="ChEBI" id="CHEBI:29105"/>
        <label>1</label>
    </ligand>
</feature>
<feature type="binding site" evidence="1">
    <location>
        <position position="108"/>
    </location>
    <ligand>
        <name>Zn(2+)</name>
        <dbReference type="ChEBI" id="CHEBI:29105"/>
        <label>2</label>
    </ligand>
</feature>
<feature type="binding site" evidence="1">
    <location>
        <position position="142"/>
    </location>
    <ligand>
        <name>Zn(2+)</name>
        <dbReference type="ChEBI" id="CHEBI:29105"/>
        <label>2</label>
    </ligand>
</feature>
<feature type="binding site" evidence="1">
    <location>
        <position position="170"/>
    </location>
    <ligand>
        <name>Zn(2+)</name>
        <dbReference type="ChEBI" id="CHEBI:29105"/>
        <label>1</label>
    </ligand>
</feature>
<feature type="binding site" evidence="1">
    <location>
        <position position="359"/>
    </location>
    <ligand>
        <name>Zn(2+)</name>
        <dbReference type="ChEBI" id="CHEBI:29105"/>
        <label>2</label>
    </ligand>
</feature>
<sequence length="390" mass="41663">MLTSDLSNDLANPLPLAQALIRRPSVTPIDAGALDVMQAALEQLGFTCRRYPFGEVDNLYARRGTASPCFLFAGHTDVVPPGDDDAWRKPPFGAEAEDGVLWGRGAADMKGAIAAMVASVQRFLDTGEPKGSIAFLITGDEEGPAIHGTKAVLEALADEGETFDHCLVGEPTNPNVLGDTIKSGRRGSLNCTLTVTGRQGHVAYPERAENPIPALLDLLGRLLARKLDDGVPPFQPSNLEVTSVDVGNPTTNVIPAAATARFNIRFNIAHNGDALSDWIRSEVAKIDLDFDGRIEADIHVTGEAFLTPAGPFTTLLQDCVEAETGRRPALTTGGGTSDARFIQLYAPVAEFGLVGATMHQVDERVPVSDIETLTAIYTRILKGYFKDFPA</sequence>
<evidence type="ECO:0000255" key="1">
    <source>
        <dbReference type="HAMAP-Rule" id="MF_01690"/>
    </source>
</evidence>
<accession>Q0ASJ5</accession>
<keyword id="KW-0028">Amino-acid biosynthesis</keyword>
<keyword id="KW-0170">Cobalt</keyword>
<keyword id="KW-0220">Diaminopimelate biosynthesis</keyword>
<keyword id="KW-0378">Hydrolase</keyword>
<keyword id="KW-0457">Lysine biosynthesis</keyword>
<keyword id="KW-0479">Metal-binding</keyword>
<keyword id="KW-1185">Reference proteome</keyword>
<keyword id="KW-0862">Zinc</keyword>
<organism>
    <name type="scientific">Maricaulis maris (strain MCS10)</name>
    <name type="common">Caulobacter maris</name>
    <dbReference type="NCBI Taxonomy" id="394221"/>
    <lineage>
        <taxon>Bacteria</taxon>
        <taxon>Pseudomonadati</taxon>
        <taxon>Pseudomonadota</taxon>
        <taxon>Alphaproteobacteria</taxon>
        <taxon>Maricaulales</taxon>
        <taxon>Maricaulaceae</taxon>
        <taxon>Maricaulis</taxon>
    </lineage>
</organism>
<proteinExistence type="inferred from homology"/>
<gene>
    <name evidence="1" type="primary">dapE</name>
    <name type="ordered locus">Mmar10_0449</name>
</gene>
<reference key="1">
    <citation type="submission" date="2006-08" db="EMBL/GenBank/DDBJ databases">
        <title>Complete sequence of Maricaulis maris MCS10.</title>
        <authorList>
            <consortium name="US DOE Joint Genome Institute"/>
            <person name="Copeland A."/>
            <person name="Lucas S."/>
            <person name="Lapidus A."/>
            <person name="Barry K."/>
            <person name="Detter J.C."/>
            <person name="Glavina del Rio T."/>
            <person name="Hammon N."/>
            <person name="Israni S."/>
            <person name="Dalin E."/>
            <person name="Tice H."/>
            <person name="Pitluck S."/>
            <person name="Saunders E."/>
            <person name="Brettin T."/>
            <person name="Bruce D."/>
            <person name="Han C."/>
            <person name="Tapia R."/>
            <person name="Gilna P."/>
            <person name="Schmutz J."/>
            <person name="Larimer F."/>
            <person name="Land M."/>
            <person name="Hauser L."/>
            <person name="Kyrpides N."/>
            <person name="Mikhailova N."/>
            <person name="Viollier P."/>
            <person name="Stephens C."/>
            <person name="Richardson P."/>
        </authorList>
    </citation>
    <scope>NUCLEOTIDE SEQUENCE [LARGE SCALE GENOMIC DNA]</scope>
    <source>
        <strain>MCS10</strain>
    </source>
</reference>
<comment type="function">
    <text evidence="1">Catalyzes the hydrolysis of N-succinyl-L,L-diaminopimelic acid (SDAP), forming succinate and LL-2,6-diaminopimelate (DAP), an intermediate involved in the bacterial biosynthesis of lysine and meso-diaminopimelic acid, an essential component of bacterial cell walls.</text>
</comment>
<comment type="catalytic activity">
    <reaction evidence="1">
        <text>N-succinyl-(2S,6S)-2,6-diaminopimelate + H2O = (2S,6S)-2,6-diaminopimelate + succinate</text>
        <dbReference type="Rhea" id="RHEA:22608"/>
        <dbReference type="ChEBI" id="CHEBI:15377"/>
        <dbReference type="ChEBI" id="CHEBI:30031"/>
        <dbReference type="ChEBI" id="CHEBI:57609"/>
        <dbReference type="ChEBI" id="CHEBI:58087"/>
        <dbReference type="EC" id="3.5.1.18"/>
    </reaction>
</comment>
<comment type="cofactor">
    <cofactor evidence="1">
        <name>Zn(2+)</name>
        <dbReference type="ChEBI" id="CHEBI:29105"/>
    </cofactor>
    <cofactor evidence="1">
        <name>Co(2+)</name>
        <dbReference type="ChEBI" id="CHEBI:48828"/>
    </cofactor>
    <text evidence="1">Binds 2 Zn(2+) or Co(2+) ions per subunit.</text>
</comment>
<comment type="pathway">
    <text evidence="1">Amino-acid biosynthesis; L-lysine biosynthesis via DAP pathway; LL-2,6-diaminopimelate from (S)-tetrahydrodipicolinate (succinylase route): step 3/3.</text>
</comment>
<comment type="subunit">
    <text evidence="1">Homodimer.</text>
</comment>
<comment type="similarity">
    <text evidence="1">Belongs to the peptidase M20A family. DapE subfamily.</text>
</comment>
<protein>
    <recommendedName>
        <fullName evidence="1">Succinyl-diaminopimelate desuccinylase</fullName>
        <shortName evidence="1">SDAP desuccinylase</shortName>
        <ecNumber evidence="1">3.5.1.18</ecNumber>
    </recommendedName>
    <alternativeName>
        <fullName evidence="1">N-succinyl-LL-2,6-diaminoheptanedioate amidohydrolase</fullName>
    </alternativeName>
</protein>
<name>DAPE_MARMM</name>
<dbReference type="EC" id="3.5.1.18" evidence="1"/>
<dbReference type="EMBL" id="CP000449">
    <property type="protein sequence ID" value="ABI64742.1"/>
    <property type="molecule type" value="Genomic_DNA"/>
</dbReference>
<dbReference type="SMR" id="Q0ASJ5"/>
<dbReference type="STRING" id="394221.Mmar10_0449"/>
<dbReference type="KEGG" id="mmr:Mmar10_0449"/>
<dbReference type="eggNOG" id="COG0624">
    <property type="taxonomic scope" value="Bacteria"/>
</dbReference>
<dbReference type="HOGENOM" id="CLU_021802_4_0_5"/>
<dbReference type="OrthoDB" id="9809784at2"/>
<dbReference type="UniPathway" id="UPA00034">
    <property type="reaction ID" value="UER00021"/>
</dbReference>
<dbReference type="Proteomes" id="UP000001964">
    <property type="component" value="Chromosome"/>
</dbReference>
<dbReference type="GO" id="GO:0008777">
    <property type="term" value="F:acetylornithine deacetylase activity"/>
    <property type="evidence" value="ECO:0007669"/>
    <property type="project" value="TreeGrafter"/>
</dbReference>
<dbReference type="GO" id="GO:0050897">
    <property type="term" value="F:cobalt ion binding"/>
    <property type="evidence" value="ECO:0007669"/>
    <property type="project" value="UniProtKB-UniRule"/>
</dbReference>
<dbReference type="GO" id="GO:0009014">
    <property type="term" value="F:succinyl-diaminopimelate desuccinylase activity"/>
    <property type="evidence" value="ECO:0007669"/>
    <property type="project" value="UniProtKB-UniRule"/>
</dbReference>
<dbReference type="GO" id="GO:0008270">
    <property type="term" value="F:zinc ion binding"/>
    <property type="evidence" value="ECO:0007669"/>
    <property type="project" value="UniProtKB-UniRule"/>
</dbReference>
<dbReference type="GO" id="GO:0019877">
    <property type="term" value="P:diaminopimelate biosynthetic process"/>
    <property type="evidence" value="ECO:0007669"/>
    <property type="project" value="UniProtKB-UniRule"/>
</dbReference>
<dbReference type="GO" id="GO:0006526">
    <property type="term" value="P:L-arginine biosynthetic process"/>
    <property type="evidence" value="ECO:0007669"/>
    <property type="project" value="TreeGrafter"/>
</dbReference>
<dbReference type="GO" id="GO:0009089">
    <property type="term" value="P:lysine biosynthetic process via diaminopimelate"/>
    <property type="evidence" value="ECO:0007669"/>
    <property type="project" value="UniProtKB-UniRule"/>
</dbReference>
<dbReference type="CDD" id="cd03891">
    <property type="entry name" value="M20_DapE_proteobac"/>
    <property type="match status" value="1"/>
</dbReference>
<dbReference type="Gene3D" id="3.40.630.10">
    <property type="entry name" value="Zn peptidases"/>
    <property type="match status" value="2"/>
</dbReference>
<dbReference type="HAMAP" id="MF_01690">
    <property type="entry name" value="DapE"/>
    <property type="match status" value="1"/>
</dbReference>
<dbReference type="InterPro" id="IPR001261">
    <property type="entry name" value="ArgE/DapE_CS"/>
</dbReference>
<dbReference type="InterPro" id="IPR036264">
    <property type="entry name" value="Bact_exopeptidase_dim_dom"/>
</dbReference>
<dbReference type="InterPro" id="IPR005941">
    <property type="entry name" value="DapE_proteobac"/>
</dbReference>
<dbReference type="InterPro" id="IPR002933">
    <property type="entry name" value="Peptidase_M20"/>
</dbReference>
<dbReference type="InterPro" id="IPR011650">
    <property type="entry name" value="Peptidase_M20_dimer"/>
</dbReference>
<dbReference type="InterPro" id="IPR050072">
    <property type="entry name" value="Peptidase_M20A"/>
</dbReference>
<dbReference type="NCBIfam" id="TIGR01246">
    <property type="entry name" value="dapE_proteo"/>
    <property type="match status" value="1"/>
</dbReference>
<dbReference type="NCBIfam" id="NF009557">
    <property type="entry name" value="PRK13009.1"/>
    <property type="match status" value="1"/>
</dbReference>
<dbReference type="PANTHER" id="PTHR43808">
    <property type="entry name" value="ACETYLORNITHINE DEACETYLASE"/>
    <property type="match status" value="1"/>
</dbReference>
<dbReference type="PANTHER" id="PTHR43808:SF31">
    <property type="entry name" value="N-ACETYL-L-CITRULLINE DEACETYLASE"/>
    <property type="match status" value="1"/>
</dbReference>
<dbReference type="Pfam" id="PF07687">
    <property type="entry name" value="M20_dimer"/>
    <property type="match status" value="1"/>
</dbReference>
<dbReference type="Pfam" id="PF01546">
    <property type="entry name" value="Peptidase_M20"/>
    <property type="match status" value="1"/>
</dbReference>
<dbReference type="SUPFAM" id="SSF55031">
    <property type="entry name" value="Bacterial exopeptidase dimerisation domain"/>
    <property type="match status" value="1"/>
</dbReference>
<dbReference type="SUPFAM" id="SSF53187">
    <property type="entry name" value="Zn-dependent exopeptidases"/>
    <property type="match status" value="1"/>
</dbReference>
<dbReference type="PROSITE" id="PS00759">
    <property type="entry name" value="ARGE_DAPE_CPG2_2"/>
    <property type="match status" value="1"/>
</dbReference>